<name>ARGJ_BACCR</name>
<gene>
    <name evidence="1" type="primary">argJ</name>
    <name type="ordered locus">BC_4129</name>
</gene>
<evidence type="ECO:0000255" key="1">
    <source>
        <dbReference type="HAMAP-Rule" id="MF_01106"/>
    </source>
</evidence>
<proteinExistence type="inferred from homology"/>
<accession>Q818W0</accession>
<comment type="function">
    <text evidence="1">Catalyzes two activities which are involved in the cyclic version of arginine biosynthesis: the synthesis of N-acetylglutamate from glutamate and acetyl-CoA as the acetyl donor, and of ornithine by transacetylation between N(2)-acetylornithine and glutamate.</text>
</comment>
<comment type="catalytic activity">
    <reaction evidence="1">
        <text>N(2)-acetyl-L-ornithine + L-glutamate = N-acetyl-L-glutamate + L-ornithine</text>
        <dbReference type="Rhea" id="RHEA:15349"/>
        <dbReference type="ChEBI" id="CHEBI:29985"/>
        <dbReference type="ChEBI" id="CHEBI:44337"/>
        <dbReference type="ChEBI" id="CHEBI:46911"/>
        <dbReference type="ChEBI" id="CHEBI:57805"/>
        <dbReference type="EC" id="2.3.1.35"/>
    </reaction>
</comment>
<comment type="catalytic activity">
    <reaction evidence="1">
        <text>L-glutamate + acetyl-CoA = N-acetyl-L-glutamate + CoA + H(+)</text>
        <dbReference type="Rhea" id="RHEA:24292"/>
        <dbReference type="ChEBI" id="CHEBI:15378"/>
        <dbReference type="ChEBI" id="CHEBI:29985"/>
        <dbReference type="ChEBI" id="CHEBI:44337"/>
        <dbReference type="ChEBI" id="CHEBI:57287"/>
        <dbReference type="ChEBI" id="CHEBI:57288"/>
        <dbReference type="EC" id="2.3.1.1"/>
    </reaction>
</comment>
<comment type="pathway">
    <text evidence="1">Amino-acid biosynthesis; L-arginine biosynthesis; L-ornithine and N-acetyl-L-glutamate from L-glutamate and N(2)-acetyl-L-ornithine (cyclic): step 1/1.</text>
</comment>
<comment type="pathway">
    <text evidence="1">Amino-acid biosynthesis; L-arginine biosynthesis; N(2)-acetyl-L-ornithine from L-glutamate: step 1/4.</text>
</comment>
<comment type="subunit">
    <text evidence="1">Heterotetramer of two alpha and two beta chains.</text>
</comment>
<comment type="subcellular location">
    <subcellularLocation>
        <location evidence="1">Cytoplasm</location>
    </subcellularLocation>
</comment>
<comment type="similarity">
    <text evidence="1">Belongs to the ArgJ family.</text>
</comment>
<sequence>MMIKVASITKLENGSIVTPKGFSAIGTVNGLKKEKKDLGAIVCDVPASCAAVYTTNQIQAAPLQVTKDSITAEGKLQAIIVNSGNANACTGMQGLQDAYEMRVLGAEHFGMKENYVAVASTGVIGVPLPMDIIRKGVATLIPTKEESEAYSFSEAILTTDLITKETCYEMIIDGKKVVIAGVAKGSGMIHPNMATMLSFITTDAHIEHNVLQTALSQITNHTFNQITVDGDTSTNDMVIVMASGLSETRPINMEHTDWETFVGALQKVCEDLAKKIAQDGEGATKLIEVNVLGAQTNEEAKKIAKQIVGSSLVKTAIHGEDPNWGRIISSIGQSEVAINPNTIDITLQSISVLKNSEPQTFSEEKMKERLQEDEIVINVYLHLGEETGSAWGCDLSYEYVKINACYRT</sequence>
<keyword id="KW-0012">Acyltransferase</keyword>
<keyword id="KW-0028">Amino-acid biosynthesis</keyword>
<keyword id="KW-0055">Arginine biosynthesis</keyword>
<keyword id="KW-0068">Autocatalytic cleavage</keyword>
<keyword id="KW-0963">Cytoplasm</keyword>
<keyword id="KW-0511">Multifunctional enzyme</keyword>
<keyword id="KW-1185">Reference proteome</keyword>
<keyword id="KW-0808">Transferase</keyword>
<reference key="1">
    <citation type="journal article" date="2003" name="Nature">
        <title>Genome sequence of Bacillus cereus and comparative analysis with Bacillus anthracis.</title>
        <authorList>
            <person name="Ivanova N."/>
            <person name="Sorokin A."/>
            <person name="Anderson I."/>
            <person name="Galleron N."/>
            <person name="Candelon B."/>
            <person name="Kapatral V."/>
            <person name="Bhattacharyya A."/>
            <person name="Reznik G."/>
            <person name="Mikhailova N."/>
            <person name="Lapidus A."/>
            <person name="Chu L."/>
            <person name="Mazur M."/>
            <person name="Goltsman E."/>
            <person name="Larsen N."/>
            <person name="D'Souza M."/>
            <person name="Walunas T."/>
            <person name="Grechkin Y."/>
            <person name="Pusch G."/>
            <person name="Haselkorn R."/>
            <person name="Fonstein M."/>
            <person name="Ehrlich S.D."/>
            <person name="Overbeek R."/>
            <person name="Kyrpides N.C."/>
        </authorList>
    </citation>
    <scope>NUCLEOTIDE SEQUENCE [LARGE SCALE GENOMIC DNA]</scope>
    <source>
        <strain>ATCC 14579 / DSM 31 / CCUG 7414 / JCM 2152 / NBRC 15305 / NCIMB 9373 / NCTC 2599 / NRRL B-3711</strain>
    </source>
</reference>
<feature type="chain" id="PRO_0000002109" description="Arginine biosynthesis bifunctional protein ArgJ alpha chain" evidence="1">
    <location>
        <begin position="1"/>
        <end position="194"/>
    </location>
</feature>
<feature type="chain" id="PRO_0000002110" description="Arginine biosynthesis bifunctional protein ArgJ beta chain" evidence="1">
    <location>
        <begin position="195"/>
        <end position="408"/>
    </location>
</feature>
<feature type="active site" description="Nucleophile" evidence="1">
    <location>
        <position position="195"/>
    </location>
</feature>
<feature type="binding site" evidence="1">
    <location>
        <position position="158"/>
    </location>
    <ligand>
        <name>substrate</name>
    </ligand>
</feature>
<feature type="binding site" evidence="1">
    <location>
        <position position="184"/>
    </location>
    <ligand>
        <name>substrate</name>
    </ligand>
</feature>
<feature type="binding site" evidence="1">
    <location>
        <position position="195"/>
    </location>
    <ligand>
        <name>substrate</name>
    </ligand>
</feature>
<feature type="binding site" evidence="1">
    <location>
        <position position="281"/>
    </location>
    <ligand>
        <name>substrate</name>
    </ligand>
</feature>
<feature type="binding site" evidence="1">
    <location>
        <position position="403"/>
    </location>
    <ligand>
        <name>substrate</name>
    </ligand>
</feature>
<feature type="binding site" evidence="1">
    <location>
        <position position="408"/>
    </location>
    <ligand>
        <name>substrate</name>
    </ligand>
</feature>
<feature type="site" description="Involved in the stabilization of negative charge on the oxyanion by the formation of the oxyanion hole" evidence="1">
    <location>
        <position position="121"/>
    </location>
</feature>
<feature type="site" description="Involved in the stabilization of negative charge on the oxyanion by the formation of the oxyanion hole" evidence="1">
    <location>
        <position position="122"/>
    </location>
</feature>
<feature type="site" description="Cleavage; by autolysis" evidence="1">
    <location>
        <begin position="194"/>
        <end position="195"/>
    </location>
</feature>
<organism>
    <name type="scientific">Bacillus cereus (strain ATCC 14579 / DSM 31 / CCUG 7414 / JCM 2152 / NBRC 15305 / NCIMB 9373 / NCTC 2599 / NRRL B-3711)</name>
    <dbReference type="NCBI Taxonomy" id="226900"/>
    <lineage>
        <taxon>Bacteria</taxon>
        <taxon>Bacillati</taxon>
        <taxon>Bacillota</taxon>
        <taxon>Bacilli</taxon>
        <taxon>Bacillales</taxon>
        <taxon>Bacillaceae</taxon>
        <taxon>Bacillus</taxon>
        <taxon>Bacillus cereus group</taxon>
    </lineage>
</organism>
<dbReference type="EC" id="2.3.1.35" evidence="1"/>
<dbReference type="EC" id="2.3.1.1" evidence="1"/>
<dbReference type="EMBL" id="AE016877">
    <property type="protein sequence ID" value="AAP11047.1"/>
    <property type="molecule type" value="Genomic_DNA"/>
</dbReference>
<dbReference type="RefSeq" id="NP_833846.1">
    <property type="nucleotide sequence ID" value="NC_004722.1"/>
</dbReference>
<dbReference type="SMR" id="Q818W0"/>
<dbReference type="STRING" id="226900.BC_4129"/>
<dbReference type="MEROPS" id="T05.002"/>
<dbReference type="KEGG" id="bce:BC4129"/>
<dbReference type="PATRIC" id="fig|226900.8.peg.4267"/>
<dbReference type="HOGENOM" id="CLU_027172_1_0_9"/>
<dbReference type="UniPathway" id="UPA00068">
    <property type="reaction ID" value="UER00106"/>
</dbReference>
<dbReference type="UniPathway" id="UPA00068">
    <property type="reaction ID" value="UER00111"/>
</dbReference>
<dbReference type="Proteomes" id="UP000001417">
    <property type="component" value="Chromosome"/>
</dbReference>
<dbReference type="GO" id="GO:0005737">
    <property type="term" value="C:cytoplasm"/>
    <property type="evidence" value="ECO:0007669"/>
    <property type="project" value="UniProtKB-SubCell"/>
</dbReference>
<dbReference type="GO" id="GO:0004358">
    <property type="term" value="F:glutamate N-acetyltransferase activity"/>
    <property type="evidence" value="ECO:0007669"/>
    <property type="project" value="UniProtKB-UniRule"/>
</dbReference>
<dbReference type="GO" id="GO:0004042">
    <property type="term" value="F:L-glutamate N-acetyltransferase activity"/>
    <property type="evidence" value="ECO:0000318"/>
    <property type="project" value="GO_Central"/>
</dbReference>
<dbReference type="GO" id="GO:0006526">
    <property type="term" value="P:L-arginine biosynthetic process"/>
    <property type="evidence" value="ECO:0007669"/>
    <property type="project" value="UniProtKB-UniRule"/>
</dbReference>
<dbReference type="GO" id="GO:0006592">
    <property type="term" value="P:ornithine biosynthetic process"/>
    <property type="evidence" value="ECO:0000318"/>
    <property type="project" value="GO_Central"/>
</dbReference>
<dbReference type="CDD" id="cd02152">
    <property type="entry name" value="OAT"/>
    <property type="match status" value="1"/>
</dbReference>
<dbReference type="FunFam" id="3.10.20.340:FF:000001">
    <property type="entry name" value="Arginine biosynthesis bifunctional protein ArgJ, chloroplastic"/>
    <property type="match status" value="1"/>
</dbReference>
<dbReference type="FunFam" id="3.60.70.12:FF:000001">
    <property type="entry name" value="Arginine biosynthesis bifunctional protein ArgJ, chloroplastic"/>
    <property type="match status" value="1"/>
</dbReference>
<dbReference type="FunFam" id="3.30.2330.10:FF:000001">
    <property type="entry name" value="Arginine biosynthesis bifunctional protein ArgJ, mitochondrial"/>
    <property type="match status" value="1"/>
</dbReference>
<dbReference type="Gene3D" id="3.30.2330.10">
    <property type="entry name" value="arginine biosynthesis bifunctional protein suprefamily"/>
    <property type="match status" value="1"/>
</dbReference>
<dbReference type="Gene3D" id="3.10.20.340">
    <property type="entry name" value="ArgJ beta chain, C-terminal domain"/>
    <property type="match status" value="1"/>
</dbReference>
<dbReference type="Gene3D" id="3.60.70.12">
    <property type="entry name" value="L-amino peptidase D-ALA esterase/amidase"/>
    <property type="match status" value="1"/>
</dbReference>
<dbReference type="HAMAP" id="MF_01106">
    <property type="entry name" value="ArgJ"/>
    <property type="match status" value="1"/>
</dbReference>
<dbReference type="InterPro" id="IPR002813">
    <property type="entry name" value="Arg_biosynth_ArgJ"/>
</dbReference>
<dbReference type="InterPro" id="IPR016117">
    <property type="entry name" value="ArgJ-like_dom_sf"/>
</dbReference>
<dbReference type="InterPro" id="IPR042195">
    <property type="entry name" value="ArgJ_beta_C"/>
</dbReference>
<dbReference type="NCBIfam" id="TIGR00120">
    <property type="entry name" value="ArgJ"/>
    <property type="match status" value="1"/>
</dbReference>
<dbReference type="NCBIfam" id="NF003802">
    <property type="entry name" value="PRK05388.1"/>
    <property type="match status" value="1"/>
</dbReference>
<dbReference type="PANTHER" id="PTHR23100">
    <property type="entry name" value="ARGININE BIOSYNTHESIS BIFUNCTIONAL PROTEIN ARGJ"/>
    <property type="match status" value="1"/>
</dbReference>
<dbReference type="PANTHER" id="PTHR23100:SF0">
    <property type="entry name" value="ARGININE BIOSYNTHESIS BIFUNCTIONAL PROTEIN ARGJ, MITOCHONDRIAL"/>
    <property type="match status" value="1"/>
</dbReference>
<dbReference type="Pfam" id="PF01960">
    <property type="entry name" value="ArgJ"/>
    <property type="match status" value="1"/>
</dbReference>
<dbReference type="SUPFAM" id="SSF56266">
    <property type="entry name" value="DmpA/ArgJ-like"/>
    <property type="match status" value="1"/>
</dbReference>
<protein>
    <recommendedName>
        <fullName evidence="1">Arginine biosynthesis bifunctional protein ArgJ</fullName>
    </recommendedName>
    <domain>
        <recommendedName>
            <fullName evidence="1">Glutamate N-acetyltransferase</fullName>
            <ecNumber evidence="1">2.3.1.35</ecNumber>
        </recommendedName>
        <alternativeName>
            <fullName evidence="1">Ornithine acetyltransferase</fullName>
            <shortName evidence="1">OATase</shortName>
        </alternativeName>
        <alternativeName>
            <fullName evidence="1">Ornithine transacetylase</fullName>
        </alternativeName>
    </domain>
    <domain>
        <recommendedName>
            <fullName evidence="1">Amino-acid acetyltransferase</fullName>
            <ecNumber evidence="1">2.3.1.1</ecNumber>
        </recommendedName>
        <alternativeName>
            <fullName evidence="1">N-acetylglutamate synthase</fullName>
            <shortName evidence="1">AGSase</shortName>
        </alternativeName>
    </domain>
    <component>
        <recommendedName>
            <fullName evidence="1">Arginine biosynthesis bifunctional protein ArgJ alpha chain</fullName>
        </recommendedName>
    </component>
    <component>
        <recommendedName>
            <fullName evidence="1">Arginine biosynthesis bifunctional protein ArgJ beta chain</fullName>
        </recommendedName>
    </component>
</protein>